<accession>P38070</accession>
<accession>D6VQ29</accession>
<name>YPK3_YEAST</name>
<comment type="function">
    <text evidence="6 11">AGC kinase which plays a role in TOR complex 1 (TORC1) signaling pathway which mediates temporal control of cell growth in response to nutrients (PubMed:11062466). Required for phosphorylation of ribosomal protein S6 (RPS6A/RPS6B) at 'Ser-232' and 'Ser-233' (PubMed:25767889).</text>
</comment>
<comment type="catalytic activity">
    <reaction evidence="6">
        <text>L-seryl-[protein] + ATP = O-phospho-L-seryl-[protein] + ADP + H(+)</text>
        <dbReference type="Rhea" id="RHEA:17989"/>
        <dbReference type="Rhea" id="RHEA-COMP:9863"/>
        <dbReference type="Rhea" id="RHEA-COMP:11604"/>
        <dbReference type="ChEBI" id="CHEBI:15378"/>
        <dbReference type="ChEBI" id="CHEBI:29999"/>
        <dbReference type="ChEBI" id="CHEBI:30616"/>
        <dbReference type="ChEBI" id="CHEBI:83421"/>
        <dbReference type="ChEBI" id="CHEBI:456216"/>
        <dbReference type="EC" id="2.7.11.1"/>
    </reaction>
</comment>
<comment type="catalytic activity">
    <reaction evidence="6">
        <text>L-threonyl-[protein] + ATP = O-phospho-L-threonyl-[protein] + ADP + H(+)</text>
        <dbReference type="Rhea" id="RHEA:46608"/>
        <dbReference type="Rhea" id="RHEA-COMP:11060"/>
        <dbReference type="Rhea" id="RHEA-COMP:11605"/>
        <dbReference type="ChEBI" id="CHEBI:15378"/>
        <dbReference type="ChEBI" id="CHEBI:30013"/>
        <dbReference type="ChEBI" id="CHEBI:30616"/>
        <dbReference type="ChEBI" id="CHEBI:61977"/>
        <dbReference type="ChEBI" id="CHEBI:456216"/>
        <dbReference type="EC" id="2.7.11.1"/>
    </reaction>
</comment>
<comment type="subcellular location">
    <subcellularLocation>
        <location evidence="7">Cytoplasm</location>
    </subcellularLocation>
</comment>
<comment type="PTM">
    <text evidence="9 10">Phosphorylated by PKA in a TORC1-dependent manner. Phosphorylation at PKA consensus sites RRxS/T decreases upon rapamycin treatment.</text>
</comment>
<comment type="miscellaneous">
    <text evidence="8">Present with 1470 molecules/cell in log phase SD medium.</text>
</comment>
<comment type="similarity">
    <text evidence="13">Belongs to the protein kinase superfamily. AGC Ser/Thr protein kinase family. S6 kinase subfamily.</text>
</comment>
<proteinExistence type="evidence at protein level"/>
<evidence type="ECO:0000250" key="1">
    <source>
        <dbReference type="UniProtKB" id="Q12706"/>
    </source>
</evidence>
<evidence type="ECO:0000255" key="2">
    <source>
        <dbReference type="PROSITE-ProRule" id="PRU00159"/>
    </source>
</evidence>
<evidence type="ECO:0000255" key="3">
    <source>
        <dbReference type="PROSITE-ProRule" id="PRU00618"/>
    </source>
</evidence>
<evidence type="ECO:0000255" key="4">
    <source>
        <dbReference type="PROSITE-ProRule" id="PRU10027"/>
    </source>
</evidence>
<evidence type="ECO:0000256" key="5">
    <source>
        <dbReference type="SAM" id="MobiDB-lite"/>
    </source>
</evidence>
<evidence type="ECO:0000269" key="6">
    <source>
    </source>
</evidence>
<evidence type="ECO:0000269" key="7">
    <source>
    </source>
</evidence>
<evidence type="ECO:0000269" key="8">
    <source>
    </source>
</evidence>
<evidence type="ECO:0000269" key="9">
    <source>
    </source>
</evidence>
<evidence type="ECO:0000269" key="10">
    <source>
    </source>
</evidence>
<evidence type="ECO:0000269" key="11">
    <source>
    </source>
</evidence>
<evidence type="ECO:0000303" key="12">
    <source>
    </source>
</evidence>
<evidence type="ECO:0000305" key="13"/>
<evidence type="ECO:0000305" key="14">
    <source>
    </source>
</evidence>
<evidence type="ECO:0000305" key="15">
    <source>
    </source>
</evidence>
<evidence type="ECO:0000312" key="16">
    <source>
        <dbReference type="SGD" id="S000000232"/>
    </source>
</evidence>
<evidence type="ECO:0007744" key="17">
    <source>
    </source>
</evidence>
<evidence type="ECO:0007744" key="18">
    <source>
    </source>
</evidence>
<evidence type="ECO:0007744" key="19">
    <source>
    </source>
</evidence>
<keyword id="KW-0067">ATP-binding</keyword>
<keyword id="KW-0963">Cytoplasm</keyword>
<keyword id="KW-0418">Kinase</keyword>
<keyword id="KW-0547">Nucleotide-binding</keyword>
<keyword id="KW-0597">Phosphoprotein</keyword>
<keyword id="KW-1185">Reference proteome</keyword>
<keyword id="KW-0723">Serine/threonine-protein kinase</keyword>
<keyword id="KW-0808">Transferase</keyword>
<reference key="1">
    <citation type="journal article" date="1994" name="Yeast">
        <title>The complete sequence of a 33 kb fragment on the right arm of chromosome II from Saccharomyces cerevisiae reveals 16 open reading frames, including ten new open reading frames, five previously identified genes and a homologue of the SCO1 gene.</title>
        <authorList>
            <person name="Smits P.H.M."/>
            <person name="de Haan M."/>
            <person name="Maat C."/>
            <person name="Grivell L.A."/>
        </authorList>
    </citation>
    <scope>NUCLEOTIDE SEQUENCE [GENOMIC DNA]</scope>
    <source>
        <strain>ATCC 204508 / S288c</strain>
    </source>
</reference>
<reference key="2">
    <citation type="journal article" date="1994" name="EMBO J.">
        <title>Complete DNA sequence of yeast chromosome II.</title>
        <authorList>
            <person name="Feldmann H."/>
            <person name="Aigle M."/>
            <person name="Aljinovic G."/>
            <person name="Andre B."/>
            <person name="Baclet M.C."/>
            <person name="Barthe C."/>
            <person name="Baur A."/>
            <person name="Becam A.-M."/>
            <person name="Biteau N."/>
            <person name="Boles E."/>
            <person name="Brandt T."/>
            <person name="Brendel M."/>
            <person name="Brueckner M."/>
            <person name="Bussereau F."/>
            <person name="Christiansen C."/>
            <person name="Contreras R."/>
            <person name="Crouzet M."/>
            <person name="Cziepluch C."/>
            <person name="Demolis N."/>
            <person name="Delaveau T."/>
            <person name="Doignon F."/>
            <person name="Domdey H."/>
            <person name="Duesterhus S."/>
            <person name="Dubois E."/>
            <person name="Dujon B."/>
            <person name="El Bakkoury M."/>
            <person name="Entian K.-D."/>
            <person name="Feuermann M."/>
            <person name="Fiers W."/>
            <person name="Fobo G.M."/>
            <person name="Fritz C."/>
            <person name="Gassenhuber J."/>
            <person name="Glansdorff N."/>
            <person name="Goffeau A."/>
            <person name="Grivell L.A."/>
            <person name="de Haan M."/>
            <person name="Hein C."/>
            <person name="Herbert C.J."/>
            <person name="Hollenberg C.P."/>
            <person name="Holmstroem K."/>
            <person name="Jacq C."/>
            <person name="Jacquet M."/>
            <person name="Jauniaux J.-C."/>
            <person name="Jonniaux J.-L."/>
            <person name="Kallesoee T."/>
            <person name="Kiesau P."/>
            <person name="Kirchrath L."/>
            <person name="Koetter P."/>
            <person name="Korol S."/>
            <person name="Liebl S."/>
            <person name="Logghe M."/>
            <person name="Lohan A.J.E."/>
            <person name="Louis E.J."/>
            <person name="Li Z.Y."/>
            <person name="Maat M.J."/>
            <person name="Mallet L."/>
            <person name="Mannhaupt G."/>
            <person name="Messenguy F."/>
            <person name="Miosga T."/>
            <person name="Molemans F."/>
            <person name="Mueller S."/>
            <person name="Nasr F."/>
            <person name="Obermaier B."/>
            <person name="Perea J."/>
            <person name="Pierard A."/>
            <person name="Piravandi E."/>
            <person name="Pohl F.M."/>
            <person name="Pohl T.M."/>
            <person name="Potier S."/>
            <person name="Proft M."/>
            <person name="Purnelle B."/>
            <person name="Ramezani Rad M."/>
            <person name="Rieger M."/>
            <person name="Rose M."/>
            <person name="Schaaff-Gerstenschlaeger I."/>
            <person name="Scherens B."/>
            <person name="Schwarzlose C."/>
            <person name="Skala J."/>
            <person name="Slonimski P.P."/>
            <person name="Smits P.H.M."/>
            <person name="Souciet J.-L."/>
            <person name="Steensma H.Y."/>
            <person name="Stucka R."/>
            <person name="Urrestarazu L.A."/>
            <person name="van der Aart Q.J.M."/>
            <person name="Van Dyck L."/>
            <person name="Vassarotti A."/>
            <person name="Vetter I."/>
            <person name="Vierendeels F."/>
            <person name="Vissers S."/>
            <person name="Wagner G."/>
            <person name="de Wergifosse P."/>
            <person name="Wolfe K.H."/>
            <person name="Zagulski M."/>
            <person name="Zimmermann F.K."/>
            <person name="Mewes H.-W."/>
            <person name="Kleine K."/>
        </authorList>
    </citation>
    <scope>NUCLEOTIDE SEQUENCE [LARGE SCALE GENOMIC DNA]</scope>
    <source>
        <strain>ATCC 204508 / S288c</strain>
    </source>
</reference>
<reference key="3">
    <citation type="journal article" date="2014" name="G3 (Bethesda)">
        <title>The reference genome sequence of Saccharomyces cerevisiae: Then and now.</title>
        <authorList>
            <person name="Engel S.R."/>
            <person name="Dietrich F.S."/>
            <person name="Fisk D.G."/>
            <person name="Binkley G."/>
            <person name="Balakrishnan R."/>
            <person name="Costanzo M.C."/>
            <person name="Dwight S.S."/>
            <person name="Hitz B.C."/>
            <person name="Karra K."/>
            <person name="Nash R.S."/>
            <person name="Weng S."/>
            <person name="Wong E.D."/>
            <person name="Lloyd P."/>
            <person name="Skrzypek M.S."/>
            <person name="Miyasato S.R."/>
            <person name="Simison M."/>
            <person name="Cherry J.M."/>
        </authorList>
    </citation>
    <scope>GENOME REANNOTATION</scope>
    <source>
        <strain>ATCC 204508 / S288c</strain>
    </source>
</reference>
<reference key="4">
    <citation type="journal article" date="2000" name="Nat. Genet.">
        <title>Analysis of yeast protein kinases using protein chips.</title>
        <authorList>
            <person name="Zhu H."/>
            <person name="Klemic J.F."/>
            <person name="Chang S."/>
            <person name="Bertone P."/>
            <person name="Casamayor A."/>
            <person name="Klemic K.G."/>
            <person name="Smith D."/>
            <person name="Gerstein M."/>
            <person name="Reed M.A."/>
            <person name="Snyder M."/>
        </authorList>
    </citation>
    <scope>FUNCTION</scope>
    <scope>CATALYTIC ACTIVITY</scope>
</reference>
<reference key="5">
    <citation type="journal article" date="2003" name="Nature">
        <title>Global analysis of protein localization in budding yeast.</title>
        <authorList>
            <person name="Huh W.-K."/>
            <person name="Falvo J.V."/>
            <person name="Gerke L.C."/>
            <person name="Carroll A.S."/>
            <person name="Howson R.W."/>
            <person name="Weissman J.S."/>
            <person name="O'Shea E.K."/>
        </authorList>
    </citation>
    <scope>SUBCELLULAR LOCATION [LARGE SCALE ANALYSIS]</scope>
</reference>
<reference key="6">
    <citation type="journal article" date="2003" name="Nature">
        <title>Global analysis of protein expression in yeast.</title>
        <authorList>
            <person name="Ghaemmaghami S."/>
            <person name="Huh W.-K."/>
            <person name="Bower K."/>
            <person name="Howson R.W."/>
            <person name="Belle A."/>
            <person name="Dephoure N."/>
            <person name="O'Shea E.K."/>
            <person name="Weissman J.S."/>
        </authorList>
    </citation>
    <scope>LEVEL OF PROTEIN EXPRESSION [LARGE SCALE ANALYSIS]</scope>
</reference>
<reference key="7">
    <citation type="journal article" date="2005" name="Mol. Cell. Proteomics">
        <title>Quantitative phosphoproteomics applied to the yeast pheromone signaling pathway.</title>
        <authorList>
            <person name="Gruhler A."/>
            <person name="Olsen J.V."/>
            <person name="Mohammed S."/>
            <person name="Mortensen P."/>
            <person name="Faergeman N.J."/>
            <person name="Mann M."/>
            <person name="Jensen O.N."/>
        </authorList>
    </citation>
    <scope>PHOSPHORYLATION [LARGE SCALE ANALYSIS] AT SER-90</scope>
    <scope>IDENTIFICATION BY MASS SPECTROMETRY [LARGE SCALE ANALYSIS]</scope>
    <source>
        <strain>YAL6B</strain>
    </source>
</reference>
<reference key="8">
    <citation type="journal article" date="2005" name="Proc. Natl. Acad. Sci. U.S.A.">
        <title>An evolutionary proteomics approach identifies substrates of the cAMP-dependent protein kinase.</title>
        <authorList>
            <person name="Budovskaya Y.V."/>
            <person name="Stephan J.S."/>
            <person name="Deminoff S.J."/>
            <person name="Herman P.K."/>
        </authorList>
    </citation>
    <scope>PHOSPHORYLATION BY PKA</scope>
</reference>
<reference key="9">
    <citation type="journal article" date="2007" name="J. Proteome Res.">
        <title>Large-scale phosphorylation analysis of alpha-factor-arrested Saccharomyces cerevisiae.</title>
        <authorList>
            <person name="Li X."/>
            <person name="Gerber S.A."/>
            <person name="Rudner A.D."/>
            <person name="Beausoleil S.A."/>
            <person name="Haas W."/>
            <person name="Villen J."/>
            <person name="Elias J.E."/>
            <person name="Gygi S.P."/>
        </authorList>
    </citation>
    <scope>PHOSPHORYLATION [LARGE SCALE ANALYSIS] AT SER-90</scope>
    <scope>IDENTIFICATION BY MASS SPECTROMETRY [LARGE SCALE ANALYSIS]</scope>
    <source>
        <strain>ADR376</strain>
    </source>
</reference>
<reference key="10">
    <citation type="journal article" date="2008" name="Mol. Cell. Proteomics">
        <title>A multidimensional chromatography technology for in-depth phosphoproteome analysis.</title>
        <authorList>
            <person name="Albuquerque C.P."/>
            <person name="Smolka M.B."/>
            <person name="Payne S.H."/>
            <person name="Bafna V."/>
            <person name="Eng J."/>
            <person name="Zhou H."/>
        </authorList>
    </citation>
    <scope>IDENTIFICATION BY MASS SPECTROMETRY [LARGE SCALE ANALYSIS]</scope>
</reference>
<reference key="11">
    <citation type="journal article" date="2009" name="Science">
        <title>Global analysis of Cdk1 substrate phosphorylation sites provides insights into evolution.</title>
        <authorList>
            <person name="Holt L.J."/>
            <person name="Tuch B.B."/>
            <person name="Villen J."/>
            <person name="Johnson A.D."/>
            <person name="Gygi S.P."/>
            <person name="Morgan D.O."/>
        </authorList>
    </citation>
    <scope>PHOSPHORYLATION [LARGE SCALE ANALYSIS] AT SER-105 AND THR-107</scope>
    <scope>IDENTIFICATION BY MASS SPECTROMETRY [LARGE SCALE ANALYSIS]</scope>
</reference>
<reference key="12">
    <citation type="journal article" date="2010" name="Mol. Biol. Cell">
        <title>The rapamycin-sensitive phosphoproteome reveals that TOR controls protein kinase A toward some but not all substrates.</title>
        <authorList>
            <person name="Soulard A."/>
            <person name="Cremonesi A."/>
            <person name="Moes S."/>
            <person name="Schutz F."/>
            <person name="Jeno P."/>
            <person name="Hall M.N."/>
        </authorList>
    </citation>
    <scope>PHOSPHORYLATION BY PKA</scope>
</reference>
<reference key="13">
    <citation type="journal article" date="2012" name="Proc. Natl. Acad. Sci. U.S.A.">
        <title>N-terminal acetylome analyses and functional insights of the N-terminal acetyltransferase NatB.</title>
        <authorList>
            <person name="Van Damme P."/>
            <person name="Lasa M."/>
            <person name="Polevoda B."/>
            <person name="Gazquez C."/>
            <person name="Elosegui-Artola A."/>
            <person name="Kim D.S."/>
            <person name="De Juan-Pardo E."/>
            <person name="Demeyer K."/>
            <person name="Hole K."/>
            <person name="Larrea E."/>
            <person name="Timmerman E."/>
            <person name="Prieto J."/>
            <person name="Arnesen T."/>
            <person name="Sherman F."/>
            <person name="Gevaert K."/>
            <person name="Aldabe R."/>
        </authorList>
    </citation>
    <scope>IDENTIFICATION BY MASS SPECTROMETRY [LARGE SCALE ANALYSIS]</scope>
</reference>
<reference key="14">
    <citation type="journal article" date="2015" name="PLoS ONE">
        <title>TORC1 promotes phosphorylation of ribosomal protein S6 via the AGC kinase Ypk3 in Saccharomyces cerevisiae.</title>
        <authorList>
            <person name="Gonzalez A."/>
            <person name="Shimobayashi M."/>
            <person name="Eisenberg T."/>
            <person name="Merle D.A."/>
            <person name="Pendl T."/>
            <person name="Hall M.N."/>
            <person name="Moustafa T."/>
        </authorList>
    </citation>
    <scope>FUNCTION</scope>
</reference>
<protein>
    <recommendedName>
        <fullName evidence="14">Serine/threonine-protein kinase YPK3</fullName>
        <ecNumber evidence="6">2.7.11.1</ecNumber>
    </recommendedName>
    <alternativeName>
        <fullName evidence="15">Ribosomal S6 kinase homolog YPK3</fullName>
        <shortName>S6K homolog YPK3</shortName>
    </alternativeName>
</protein>
<feature type="chain" id="PRO_0000086073" description="Serine/threonine-protein kinase YPK3">
    <location>
        <begin position="1"/>
        <end position="525"/>
    </location>
</feature>
<feature type="domain" description="Protein kinase" evidence="2">
    <location>
        <begin position="128"/>
        <end position="424"/>
    </location>
</feature>
<feature type="domain" description="AGC-kinase C-terminal" evidence="3">
    <location>
        <begin position="445"/>
        <end position="524"/>
    </location>
</feature>
<feature type="region of interest" description="Disordered" evidence="5">
    <location>
        <begin position="170"/>
        <end position="193"/>
    </location>
</feature>
<feature type="compositionally biased region" description="Basic and acidic residues" evidence="5">
    <location>
        <begin position="172"/>
        <end position="182"/>
    </location>
</feature>
<feature type="active site" description="Proton acceptor" evidence="2 4">
    <location>
        <position position="277"/>
    </location>
</feature>
<feature type="binding site" evidence="2">
    <location>
        <begin position="134"/>
        <end position="142"/>
    </location>
    <ligand>
        <name>ATP</name>
        <dbReference type="ChEBI" id="CHEBI:30616"/>
    </ligand>
</feature>
<feature type="binding site" evidence="2">
    <location>
        <position position="157"/>
    </location>
    <ligand>
        <name>ATP</name>
        <dbReference type="ChEBI" id="CHEBI:30616"/>
    </ligand>
</feature>
<feature type="modified residue" description="Phosphoserine" evidence="17 18">
    <location>
        <position position="90"/>
    </location>
</feature>
<feature type="modified residue" description="Phosphoserine" evidence="19">
    <location>
        <position position="105"/>
    </location>
</feature>
<feature type="modified residue" description="Phosphothreonine" evidence="19">
    <location>
        <position position="107"/>
    </location>
</feature>
<feature type="modified residue" description="Phosphoserine; by PKH1 or PKH2" evidence="1">
    <location>
        <position position="321"/>
    </location>
</feature>
<feature type="modified residue" description="Phosphothreonine; by TORC1" evidence="1">
    <location>
        <position position="490"/>
    </location>
</feature>
<feature type="modified residue" description="Phosphoserine; by TORC1" evidence="1">
    <location>
        <position position="513"/>
    </location>
</feature>
<dbReference type="EC" id="2.7.11.1" evidence="6"/>
<dbReference type="EMBL" id="X76078">
    <property type="protein sequence ID" value="CAA53684.1"/>
    <property type="molecule type" value="Genomic_DNA"/>
</dbReference>
<dbReference type="EMBL" id="Z35897">
    <property type="protein sequence ID" value="CAA84970.1"/>
    <property type="molecule type" value="Genomic_DNA"/>
</dbReference>
<dbReference type="EMBL" id="BK006936">
    <property type="protein sequence ID" value="DAA07149.1"/>
    <property type="molecule type" value="Genomic_DNA"/>
</dbReference>
<dbReference type="PIR" id="S45884">
    <property type="entry name" value="S45884"/>
</dbReference>
<dbReference type="RefSeq" id="NP_009584.1">
    <property type="nucleotide sequence ID" value="NM_001178376.1"/>
</dbReference>
<dbReference type="SMR" id="P38070"/>
<dbReference type="BioGRID" id="32730">
    <property type="interactions" value="100"/>
</dbReference>
<dbReference type="DIP" id="DIP-4629N"/>
<dbReference type="FunCoup" id="P38070">
    <property type="interactions" value="200"/>
</dbReference>
<dbReference type="IntAct" id="P38070">
    <property type="interactions" value="8"/>
</dbReference>
<dbReference type="MINT" id="P38070"/>
<dbReference type="STRING" id="4932.YBR028C"/>
<dbReference type="iPTMnet" id="P38070"/>
<dbReference type="PaxDb" id="4932-YBR028C"/>
<dbReference type="PeptideAtlas" id="P38070"/>
<dbReference type="EnsemblFungi" id="YBR028C_mRNA">
    <property type="protein sequence ID" value="YBR028C"/>
    <property type="gene ID" value="YBR028C"/>
</dbReference>
<dbReference type="GeneID" id="852316"/>
<dbReference type="KEGG" id="sce:YBR028C"/>
<dbReference type="AGR" id="SGD:S000000232"/>
<dbReference type="SGD" id="S000000232">
    <property type="gene designation" value="YPK3"/>
</dbReference>
<dbReference type="VEuPathDB" id="FungiDB:YBR028C"/>
<dbReference type="eggNOG" id="KOG0598">
    <property type="taxonomic scope" value="Eukaryota"/>
</dbReference>
<dbReference type="GeneTree" id="ENSGT00940000167362"/>
<dbReference type="HOGENOM" id="CLU_000288_63_5_1"/>
<dbReference type="InParanoid" id="P38070"/>
<dbReference type="OMA" id="IFRKIDW"/>
<dbReference type="OrthoDB" id="63267at2759"/>
<dbReference type="BioCyc" id="YEAST:G3O-29007-MONOMER"/>
<dbReference type="Reactome" id="R-SCE-166208">
    <property type="pathway name" value="mTORC1-mediated signalling"/>
</dbReference>
<dbReference type="Reactome" id="R-SCE-198693">
    <property type="pathway name" value="AKT phosphorylates targets in the nucleus"/>
</dbReference>
<dbReference type="Reactome" id="R-SCE-198753">
    <property type="pathway name" value="ERK/MAPK targets"/>
</dbReference>
<dbReference type="Reactome" id="R-SCE-2559582">
    <property type="pathway name" value="Senescence-Associated Secretory Phenotype (SASP)"/>
</dbReference>
<dbReference type="Reactome" id="R-SCE-375165">
    <property type="pathway name" value="NCAM signaling for neurite out-growth"/>
</dbReference>
<dbReference type="Reactome" id="R-SCE-444257">
    <property type="pathway name" value="RSK activation"/>
</dbReference>
<dbReference type="Reactome" id="R-SCE-881907">
    <property type="pathway name" value="Gastrin-CREB signalling pathway via PKC and MAPK"/>
</dbReference>
<dbReference type="Reactome" id="R-SCE-9856649">
    <property type="pathway name" value="Transcriptional and post-translational regulation of MITF-M expression and activity"/>
</dbReference>
<dbReference type="BioGRID-ORCS" id="852316">
    <property type="hits" value="0 hits in 13 CRISPR screens"/>
</dbReference>
<dbReference type="CD-CODE" id="A777E0F8">
    <property type="entry name" value="P-body"/>
</dbReference>
<dbReference type="PRO" id="PR:P38070"/>
<dbReference type="Proteomes" id="UP000002311">
    <property type="component" value="Chromosome II"/>
</dbReference>
<dbReference type="RNAct" id="P38070">
    <property type="molecule type" value="protein"/>
</dbReference>
<dbReference type="GO" id="GO:0005737">
    <property type="term" value="C:cytoplasm"/>
    <property type="evidence" value="ECO:0000314"/>
    <property type="project" value="SGD"/>
</dbReference>
<dbReference type="GO" id="GO:0005654">
    <property type="term" value="C:nucleoplasm"/>
    <property type="evidence" value="ECO:0000318"/>
    <property type="project" value="GO_Central"/>
</dbReference>
<dbReference type="GO" id="GO:0005524">
    <property type="term" value="F:ATP binding"/>
    <property type="evidence" value="ECO:0007669"/>
    <property type="project" value="UniProtKB-KW"/>
</dbReference>
<dbReference type="GO" id="GO:0106310">
    <property type="term" value="F:protein serine kinase activity"/>
    <property type="evidence" value="ECO:0007669"/>
    <property type="project" value="RHEA"/>
</dbReference>
<dbReference type="GO" id="GO:0004674">
    <property type="term" value="F:protein serine/threonine kinase activity"/>
    <property type="evidence" value="ECO:0000314"/>
    <property type="project" value="SGD"/>
</dbReference>
<dbReference type="GO" id="GO:0038202">
    <property type="term" value="P:TORC1 signaling"/>
    <property type="evidence" value="ECO:0000318"/>
    <property type="project" value="GO_Central"/>
</dbReference>
<dbReference type="CDD" id="cd05123">
    <property type="entry name" value="STKc_AGC"/>
    <property type="match status" value="1"/>
</dbReference>
<dbReference type="FunFam" id="1.10.510.10:FF:000913">
    <property type="entry name" value="Non-specific serine/threonine protein kinase"/>
    <property type="match status" value="1"/>
</dbReference>
<dbReference type="Gene3D" id="3.30.200.20">
    <property type="entry name" value="Phosphorylase Kinase, domain 1"/>
    <property type="match status" value="2"/>
</dbReference>
<dbReference type="Gene3D" id="1.10.510.10">
    <property type="entry name" value="Transferase(Phosphotransferase) domain 1"/>
    <property type="match status" value="1"/>
</dbReference>
<dbReference type="InterPro" id="IPR000961">
    <property type="entry name" value="AGC-kinase_C"/>
</dbReference>
<dbReference type="InterPro" id="IPR011009">
    <property type="entry name" value="Kinase-like_dom_sf"/>
</dbReference>
<dbReference type="InterPro" id="IPR017892">
    <property type="entry name" value="Pkinase_C"/>
</dbReference>
<dbReference type="InterPro" id="IPR000719">
    <property type="entry name" value="Prot_kinase_dom"/>
</dbReference>
<dbReference type="InterPro" id="IPR017441">
    <property type="entry name" value="Protein_kinase_ATP_BS"/>
</dbReference>
<dbReference type="InterPro" id="IPR008271">
    <property type="entry name" value="Ser/Thr_kinase_AS"/>
</dbReference>
<dbReference type="InterPro" id="IPR045270">
    <property type="entry name" value="STKc_AGC"/>
</dbReference>
<dbReference type="PANTHER" id="PTHR24351">
    <property type="entry name" value="RIBOSOMAL PROTEIN S6 KINASE"/>
    <property type="match status" value="1"/>
</dbReference>
<dbReference type="Pfam" id="PF00069">
    <property type="entry name" value="Pkinase"/>
    <property type="match status" value="1"/>
</dbReference>
<dbReference type="Pfam" id="PF00433">
    <property type="entry name" value="Pkinase_C"/>
    <property type="match status" value="1"/>
</dbReference>
<dbReference type="SMART" id="SM00133">
    <property type="entry name" value="S_TK_X"/>
    <property type="match status" value="1"/>
</dbReference>
<dbReference type="SMART" id="SM00220">
    <property type="entry name" value="S_TKc"/>
    <property type="match status" value="1"/>
</dbReference>
<dbReference type="SUPFAM" id="SSF56112">
    <property type="entry name" value="Protein kinase-like (PK-like)"/>
    <property type="match status" value="1"/>
</dbReference>
<dbReference type="PROSITE" id="PS51285">
    <property type="entry name" value="AGC_KINASE_CTER"/>
    <property type="match status" value="1"/>
</dbReference>
<dbReference type="PROSITE" id="PS00107">
    <property type="entry name" value="PROTEIN_KINASE_ATP"/>
    <property type="match status" value="1"/>
</dbReference>
<dbReference type="PROSITE" id="PS50011">
    <property type="entry name" value="PROTEIN_KINASE_DOM"/>
    <property type="match status" value="1"/>
</dbReference>
<dbReference type="PROSITE" id="PS00108">
    <property type="entry name" value="PROTEIN_KINASE_ST"/>
    <property type="match status" value="1"/>
</dbReference>
<organism>
    <name type="scientific">Saccharomyces cerevisiae (strain ATCC 204508 / S288c)</name>
    <name type="common">Baker's yeast</name>
    <dbReference type="NCBI Taxonomy" id="559292"/>
    <lineage>
        <taxon>Eukaryota</taxon>
        <taxon>Fungi</taxon>
        <taxon>Dikarya</taxon>
        <taxon>Ascomycota</taxon>
        <taxon>Saccharomycotina</taxon>
        <taxon>Saccharomycetes</taxon>
        <taxon>Saccharomycetales</taxon>
        <taxon>Saccharomycetaceae</taxon>
        <taxon>Saccharomyces</taxon>
    </lineage>
</organism>
<gene>
    <name evidence="12" type="primary">YPK3</name>
    <name evidence="16" type="ordered locus">YBR028C</name>
    <name type="ORF">YBR0312</name>
</gene>
<sequence>MIFSLDEELHRVSLDDKKNDIKVDYSSAIYNDINHEQGSSITYEESINHLSVHSNAIPLNGMSPAHRMRRRSSAYSKFPILTPPNTRRFSITGSDAMRTNTNRLSITPQDIISSNIGENELSRNLHDFKPVRVLGQGAYGKVLLVKDVNTSKLYAMKQLRKAEILISQTATDSKREDEDKNDGNNNDNDDGLSKRLERTFAERSILSEIEHPNIVKLFYSFHDNSKLYLLLQYIPGGELFYHLKEHGTLDETTVSFYAAEISCALRFLHTKGVVYRDLKPENCLLNQRGHLVLTDFGLSKKSANDSAVDEEDPENVNALYSIIGTPEYCAPEILLGKAYSQNCDWYSLGCLLYDMLVGKPPYTGSNHKVIINKIQQNKQGPKIPFYLSEGMKDILNALLKKETAKRWNVDKYWAKTGANNKPTKSKKKKSGAARTSLFTEHFIFRKIDWKLLESGQLQKTTLGPIVPVITDLELAENFDTEFTSMSYEETYTDSKPININSVSKSPDMFKGFSYKASGSYLEKYF</sequence>